<evidence type="ECO:0000250" key="1"/>
<evidence type="ECO:0000255" key="2"/>
<gene>
    <name type="primary">ybaN</name>
    <name type="ordered locus">SF0413</name>
    <name type="ordered locus">S0420</name>
</gene>
<proteinExistence type="inferred from homology"/>
<protein>
    <recommendedName>
        <fullName>Inner membrane protein YbaN</fullName>
    </recommendedName>
</protein>
<feature type="chain" id="PRO_0000168627" description="Inner membrane protein YbaN">
    <location>
        <begin position="1"/>
        <end position="125"/>
    </location>
</feature>
<feature type="topological domain" description="Cytoplasmic" evidence="2">
    <location>
        <begin position="1"/>
        <end position="6"/>
    </location>
</feature>
<feature type="transmembrane region" description="Helical" evidence="2">
    <location>
        <begin position="7"/>
        <end position="26"/>
    </location>
</feature>
<feature type="topological domain" description="Periplasmic" evidence="2">
    <location>
        <begin position="27"/>
        <end position="45"/>
    </location>
</feature>
<feature type="transmembrane region" description="Helical" evidence="2">
    <location>
        <begin position="46"/>
        <end position="63"/>
    </location>
</feature>
<feature type="topological domain" description="Cytoplasmic" evidence="2">
    <location>
        <begin position="64"/>
        <end position="74"/>
    </location>
</feature>
<feature type="transmembrane region" description="Helical" evidence="2">
    <location>
        <begin position="75"/>
        <end position="92"/>
    </location>
</feature>
<feature type="topological domain" description="Periplasmic" evidence="2">
    <location>
        <begin position="93"/>
        <end position="95"/>
    </location>
</feature>
<feature type="transmembrane region" description="Helical" evidence="2">
    <location>
        <begin position="96"/>
        <end position="118"/>
    </location>
</feature>
<feature type="topological domain" description="Cytoplasmic" evidence="2">
    <location>
        <begin position="119"/>
        <end position="125"/>
    </location>
</feature>
<keyword id="KW-0997">Cell inner membrane</keyword>
<keyword id="KW-1003">Cell membrane</keyword>
<keyword id="KW-0472">Membrane</keyword>
<keyword id="KW-1185">Reference proteome</keyword>
<keyword id="KW-0812">Transmembrane</keyword>
<keyword id="KW-1133">Transmembrane helix</keyword>
<organism>
    <name type="scientific">Shigella flexneri</name>
    <dbReference type="NCBI Taxonomy" id="623"/>
    <lineage>
        <taxon>Bacteria</taxon>
        <taxon>Pseudomonadati</taxon>
        <taxon>Pseudomonadota</taxon>
        <taxon>Gammaproteobacteria</taxon>
        <taxon>Enterobacterales</taxon>
        <taxon>Enterobacteriaceae</taxon>
        <taxon>Shigella</taxon>
    </lineage>
</organism>
<dbReference type="EMBL" id="AE005674">
    <property type="protein sequence ID" value="AAN42068.1"/>
    <property type="molecule type" value="Genomic_DNA"/>
</dbReference>
<dbReference type="EMBL" id="AE014073">
    <property type="protein sequence ID" value="AAP15945.1"/>
    <property type="molecule type" value="Genomic_DNA"/>
</dbReference>
<dbReference type="RefSeq" id="NP_706361.1">
    <property type="nucleotide sequence ID" value="NC_004337.2"/>
</dbReference>
<dbReference type="RefSeq" id="WP_001188905.1">
    <property type="nucleotide sequence ID" value="NZ_WPGW01000015.1"/>
</dbReference>
<dbReference type="STRING" id="198214.SF0413"/>
<dbReference type="PaxDb" id="198214-SF0413"/>
<dbReference type="GeneID" id="1027720"/>
<dbReference type="KEGG" id="sfl:SF0413"/>
<dbReference type="KEGG" id="sfx:S0420"/>
<dbReference type="PATRIC" id="fig|198214.7.peg.474"/>
<dbReference type="HOGENOM" id="CLU_113299_1_0_6"/>
<dbReference type="Proteomes" id="UP000001006">
    <property type="component" value="Chromosome"/>
</dbReference>
<dbReference type="Proteomes" id="UP000002673">
    <property type="component" value="Chromosome"/>
</dbReference>
<dbReference type="GO" id="GO:0005886">
    <property type="term" value="C:plasma membrane"/>
    <property type="evidence" value="ECO:0007669"/>
    <property type="project" value="UniProtKB-SubCell"/>
</dbReference>
<dbReference type="InterPro" id="IPR007401">
    <property type="entry name" value="DUF454"/>
</dbReference>
<dbReference type="NCBIfam" id="NF007818">
    <property type="entry name" value="PRK10527.1"/>
    <property type="match status" value="1"/>
</dbReference>
<dbReference type="PANTHER" id="PTHR35813">
    <property type="entry name" value="INNER MEMBRANE PROTEIN YBAN"/>
    <property type="match status" value="1"/>
</dbReference>
<dbReference type="PANTHER" id="PTHR35813:SF1">
    <property type="entry name" value="INNER MEMBRANE PROTEIN YBAN"/>
    <property type="match status" value="1"/>
</dbReference>
<dbReference type="Pfam" id="PF04304">
    <property type="entry name" value="DUF454"/>
    <property type="match status" value="1"/>
</dbReference>
<dbReference type="PIRSF" id="PIRSF016789">
    <property type="entry name" value="DUF454"/>
    <property type="match status" value="1"/>
</dbReference>
<comment type="subcellular location">
    <subcellularLocation>
        <location evidence="1">Cell inner membrane</location>
        <topology evidence="1">Multi-pass membrane protein</topology>
    </subcellularLocation>
</comment>
<reference key="1">
    <citation type="journal article" date="2002" name="Nucleic Acids Res.">
        <title>Genome sequence of Shigella flexneri 2a: insights into pathogenicity through comparison with genomes of Escherichia coli K12 and O157.</title>
        <authorList>
            <person name="Jin Q."/>
            <person name="Yuan Z."/>
            <person name="Xu J."/>
            <person name="Wang Y."/>
            <person name="Shen Y."/>
            <person name="Lu W."/>
            <person name="Wang J."/>
            <person name="Liu H."/>
            <person name="Yang J."/>
            <person name="Yang F."/>
            <person name="Zhang X."/>
            <person name="Zhang J."/>
            <person name="Yang G."/>
            <person name="Wu H."/>
            <person name="Qu D."/>
            <person name="Dong J."/>
            <person name="Sun L."/>
            <person name="Xue Y."/>
            <person name="Zhao A."/>
            <person name="Gao Y."/>
            <person name="Zhu J."/>
            <person name="Kan B."/>
            <person name="Ding K."/>
            <person name="Chen S."/>
            <person name="Cheng H."/>
            <person name="Yao Z."/>
            <person name="He B."/>
            <person name="Chen R."/>
            <person name="Ma D."/>
            <person name="Qiang B."/>
            <person name="Wen Y."/>
            <person name="Hou Y."/>
            <person name="Yu J."/>
        </authorList>
    </citation>
    <scope>NUCLEOTIDE SEQUENCE [LARGE SCALE GENOMIC DNA]</scope>
    <source>
        <strain>301 / Serotype 2a</strain>
    </source>
</reference>
<reference key="2">
    <citation type="journal article" date="2003" name="Infect. Immun.">
        <title>Complete genome sequence and comparative genomics of Shigella flexneri serotype 2a strain 2457T.</title>
        <authorList>
            <person name="Wei J."/>
            <person name="Goldberg M.B."/>
            <person name="Burland V."/>
            <person name="Venkatesan M.M."/>
            <person name="Deng W."/>
            <person name="Fournier G."/>
            <person name="Mayhew G.F."/>
            <person name="Plunkett G. III"/>
            <person name="Rose D.J."/>
            <person name="Darling A."/>
            <person name="Mau B."/>
            <person name="Perna N.T."/>
            <person name="Payne S.M."/>
            <person name="Runyen-Janecky L.J."/>
            <person name="Zhou S."/>
            <person name="Schwartz D.C."/>
            <person name="Blattner F.R."/>
        </authorList>
    </citation>
    <scope>NUCLEOTIDE SEQUENCE [LARGE SCALE GENOMIC DNA]</scope>
    <source>
        <strain>ATCC 700930 / 2457T / Serotype 2a</strain>
    </source>
</reference>
<sequence length="125" mass="14770">MQRIILIIIGWLAVVLGTLGVVLPVLPTTPFILLAAWCFARSSPRFHAWLLYRSWFGSYLRFWQKHHAMPRGVKPRAILLILLTFAISLWFVQMPWVRIMLLVILACLLFYMWRIPVIDEKQEKH</sequence>
<accession>P0AAR7</accession>
<accession>P45808</accession>
<accession>P77478</accession>
<name>YBAN_SHIFL</name>